<feature type="signal peptide" evidence="1">
    <location>
        <begin position="1"/>
        <end position="17"/>
    </location>
</feature>
<feature type="chain" id="PRO_0000385090" description="Putative transmembrane protein ORF68">
    <location>
        <begin position="18"/>
        <end position="693"/>
    </location>
</feature>
<feature type="topological domain" description="Extracellular" evidence="1">
    <location>
        <begin position="18"/>
        <end position="666"/>
    </location>
</feature>
<feature type="transmembrane region" description="Helical" evidence="1">
    <location>
        <begin position="667"/>
        <end position="687"/>
    </location>
</feature>
<feature type="topological domain" description="Cytoplasmic" evidence="1">
    <location>
        <begin position="688"/>
        <end position="693"/>
    </location>
</feature>
<feature type="coiled-coil region" evidence="1">
    <location>
        <begin position="208"/>
        <end position="256"/>
    </location>
</feature>
<protein>
    <recommendedName>
        <fullName>Putative transmembrane protein ORF68</fullName>
    </recommendedName>
</protein>
<keyword id="KW-0175">Coiled coil</keyword>
<keyword id="KW-1043">Host membrane</keyword>
<keyword id="KW-0472">Membrane</keyword>
<keyword id="KW-1185">Reference proteome</keyword>
<keyword id="KW-0732">Signal</keyword>
<keyword id="KW-0812">Transmembrane</keyword>
<keyword id="KW-1133">Transmembrane helix</keyword>
<organismHost>
    <name type="scientific">Magallana gigas</name>
    <name type="common">Pacific oyster</name>
    <name type="synonym">Crassostrea gigas</name>
    <dbReference type="NCBI Taxonomy" id="29159"/>
</organismHost>
<organismHost>
    <name type="scientific">Pecten maximus</name>
    <name type="common">King scallop</name>
    <name type="synonym">Pilgrim's clam</name>
    <dbReference type="NCBI Taxonomy" id="6579"/>
</organismHost>
<sequence>MILTIILYTLLFSTCSAQSVHTMPEAVSRLNWGVMFNRGPTIMNGITKYRHTFEVKVPQLVYTPIVHMKCDTDYLKVLHCEAINDLIDSINGQVEPLITELKTRIATWMNPIPNVDTLTLPETQGRRGRRRREATLGPDYCKKINDPNYEGGGGGFLSSVGNFFSSLMGSPTWDDIKIIDKHICQLADVVDLNKEKIVQLGTEFATFSKAANNRMDALEDGMKNINTRVTETNLLLEKLSTEVTGALTQLENEIKMSMAGTNLLFRVQKQLYKFQEQINTMSATVEDFGNGINVLLSGRLAPQLVSVDSVKYVIDIISEKLTQQGGETRLVDQNPALYYLLNNVVFTKSEKLNSLYIMVSFPIYSIGGLMATYRLDKTYISIKEDVVSSTQIADLPDFLAVTPDGLYYSEFSTSEISSCTGDVIKSCKNERALQSFTQMTCAAALYKDDSTKILELCDIRYDQITVPSTAIKITDDTYMIHSSKVGTGHQWTISCPLIPNYVSTTMDACNACVVQVSCGCELIAPGEFYIPLQLTGCSKVLSSYIPHIEPKFPVNLPVLYAYFDDSVLNEINGDKLLNYKWKLDIPSIAPLEEEWSQSVERSQKYSSSLKKLLEETKANRKVYASKATAMLKKATDFTDLKLSKIKTLSDTFKDLSWLTKFGTGGGIAGVTIGLLLPILAIVFSCYVFCKRRV</sequence>
<dbReference type="EMBL" id="AY509253">
    <property type="protein sequence ID" value="AAS00955.1"/>
    <property type="molecule type" value="Genomic_DNA"/>
</dbReference>
<dbReference type="RefSeq" id="YP_024608.1">
    <property type="nucleotide sequence ID" value="NC_005881.2"/>
</dbReference>
<dbReference type="KEGG" id="vg:2948263"/>
<dbReference type="Proteomes" id="UP000007021">
    <property type="component" value="Segment"/>
</dbReference>
<dbReference type="GO" id="GO:0033644">
    <property type="term" value="C:host cell membrane"/>
    <property type="evidence" value="ECO:0007669"/>
    <property type="project" value="UniProtKB-SubCell"/>
</dbReference>
<dbReference type="GO" id="GO:0016020">
    <property type="term" value="C:membrane"/>
    <property type="evidence" value="ECO:0007669"/>
    <property type="project" value="UniProtKB-KW"/>
</dbReference>
<comment type="subcellular location">
    <subcellularLocation>
        <location evidence="2">Host membrane</location>
        <topology evidence="2">Single-pass type I membrane protein</topology>
    </subcellularLocation>
</comment>
<gene>
    <name type="ORF">ORF68</name>
</gene>
<evidence type="ECO:0000255" key="1"/>
<evidence type="ECO:0000305" key="2"/>
<proteinExistence type="inferred from homology"/>
<accession>Q6R7G0</accession>
<name>Y068_OSHVF</name>
<organism>
    <name type="scientific">Ostreid herpesvirus 1 (isolate France)</name>
    <name type="common">OsHV-1</name>
    <name type="synonym">Pacific oyster herpesvirus</name>
    <dbReference type="NCBI Taxonomy" id="654903"/>
    <lineage>
        <taxon>Viruses</taxon>
        <taxon>Duplodnaviria</taxon>
        <taxon>Heunggongvirae</taxon>
        <taxon>Peploviricota</taxon>
        <taxon>Herviviricetes</taxon>
        <taxon>Herpesvirales</taxon>
        <taxon>Malacoherpesviridae</taxon>
        <taxon>Ostreavirus</taxon>
        <taxon>Ostreavirus ostreidmalaco1</taxon>
        <taxon>Ostreid herpesvirus 1</taxon>
    </lineage>
</organism>
<reference key="1">
    <citation type="journal article" date="2005" name="J. Gen. Virol.">
        <title>A novel class of herpesvirus with bivalve hosts.</title>
        <authorList>
            <person name="Davison A.J."/>
            <person name="Trus B.L."/>
            <person name="Cheng N."/>
            <person name="Steven A.C."/>
            <person name="Watson M.S."/>
            <person name="Cunningham C."/>
            <person name="Le Deuff R.M."/>
            <person name="Renault T."/>
        </authorList>
    </citation>
    <scope>NUCLEOTIDE SEQUENCE [LARGE SCALE GENOMIC DNA]</scope>
</reference>